<feature type="chain" id="PRO_0000088049" description="Methyltransferase HEMK2">
    <location>
        <begin position="1"/>
        <end position="214"/>
    </location>
</feature>
<feature type="binding site" evidence="10 15 26 27 29">
    <location>
        <position position="29"/>
    </location>
    <ligand>
        <name>S-adenosyl-L-homocysteine</name>
        <dbReference type="ChEBI" id="CHEBI:57856"/>
    </ligand>
</feature>
<feature type="binding site" evidence="13 15 28 30 31">
    <location>
        <position position="29"/>
    </location>
    <ligand>
        <name>S-adenosyl-L-methionine</name>
        <dbReference type="ChEBI" id="CHEBI:59789"/>
    </ligand>
</feature>
<feature type="binding site" evidence="10 15 26 27 29">
    <location>
        <position position="51"/>
    </location>
    <ligand>
        <name>S-adenosyl-L-homocysteine</name>
        <dbReference type="ChEBI" id="CHEBI:57856"/>
    </ligand>
</feature>
<feature type="binding site" evidence="13 15 28 30 31">
    <location>
        <position position="51"/>
    </location>
    <ligand>
        <name>S-adenosyl-L-methionine</name>
        <dbReference type="ChEBI" id="CHEBI:59789"/>
    </ligand>
</feature>
<feature type="binding site" evidence="10 15 26 27 29">
    <location>
        <position position="53"/>
    </location>
    <ligand>
        <name>S-adenosyl-L-homocysteine</name>
        <dbReference type="ChEBI" id="CHEBI:57856"/>
    </ligand>
</feature>
<feature type="binding site" evidence="13 30 31">
    <location>
        <position position="53"/>
    </location>
    <ligand>
        <name>S-adenosyl-L-methionine</name>
        <dbReference type="ChEBI" id="CHEBI:59789"/>
    </ligand>
</feature>
<feature type="binding site" evidence="10 15 26 27 29">
    <location>
        <position position="77"/>
    </location>
    <ligand>
        <name>S-adenosyl-L-homocysteine</name>
        <dbReference type="ChEBI" id="CHEBI:57856"/>
    </ligand>
</feature>
<feature type="binding site" evidence="13 15 28 30 31">
    <location>
        <position position="77"/>
    </location>
    <ligand>
        <name>S-adenosyl-L-methionine</name>
        <dbReference type="ChEBI" id="CHEBI:59789"/>
    </ligand>
</feature>
<feature type="binding site" evidence="10 15 26 27 29">
    <location>
        <position position="103"/>
    </location>
    <ligand>
        <name>S-adenosyl-L-homocysteine</name>
        <dbReference type="ChEBI" id="CHEBI:57856"/>
    </ligand>
</feature>
<feature type="binding site" evidence="13 15 28 30 31">
    <location>
        <position position="103"/>
    </location>
    <ligand>
        <name>S-adenosyl-L-methionine</name>
        <dbReference type="ChEBI" id="CHEBI:59789"/>
    </ligand>
</feature>
<feature type="binding site" evidence="10 15 26 27 29">
    <location>
        <position position="104"/>
    </location>
    <ligand>
        <name>S-adenosyl-L-homocysteine</name>
        <dbReference type="ChEBI" id="CHEBI:57856"/>
    </ligand>
</feature>
<feature type="binding site" evidence="13 15 28 30 31">
    <location>
        <position position="104"/>
    </location>
    <ligand>
        <name>S-adenosyl-L-methionine</name>
        <dbReference type="ChEBI" id="CHEBI:59789"/>
    </ligand>
</feature>
<feature type="binding site" evidence="10 27">
    <location>
        <position position="122"/>
    </location>
    <ligand>
        <name>a protein</name>
        <dbReference type="ChEBI" id="CHEBI:16541"/>
    </ligand>
    <ligandPart>
        <name>N(6)-methyl-L-lysine residue</name>
        <dbReference type="ChEBI" id="CHEBI:61929"/>
    </ligandPart>
</feature>
<feature type="binding site" evidence="10 15 23 26 27 29">
    <location>
        <position position="122"/>
    </location>
    <ligand>
        <name>S-adenosyl-L-homocysteine</name>
        <dbReference type="ChEBI" id="CHEBI:57856"/>
    </ligand>
</feature>
<feature type="binding site" evidence="13 15 28 30 31">
    <location>
        <position position="122"/>
    </location>
    <ligand>
        <name>S-adenosyl-L-methionine</name>
        <dbReference type="ChEBI" id="CHEBI:59789"/>
    </ligand>
</feature>
<feature type="splice variant" id="VSP_040294" description="In isoform 2." evidence="17">
    <location>
        <begin position="105"/>
        <end position="132"/>
    </location>
</feature>
<feature type="sequence variant" id="VAR_060445" description="In dbSNP:rs1997607.">
    <original>D</original>
    <variation>N</variation>
    <location>
        <position position="34"/>
    </location>
</feature>
<feature type="sequence variant" id="VAR_060446" description="In dbSNP:rs2205447." evidence="2">
    <original>R</original>
    <variation>K</variation>
    <location>
        <position position="146"/>
    </location>
</feature>
<feature type="sequence variant" id="VAR_060447" description="In dbSNP:rs2205446." evidence="2">
    <original>R</original>
    <variation>K</variation>
    <location>
        <position position="166"/>
    </location>
</feature>
<feature type="mutagenesis site" description="Reduced protein N(5)-glutamine methyltransferase activity." evidence="13">
    <original>E</original>
    <variation>K</variation>
    <location>
        <position position="24"/>
    </location>
</feature>
<feature type="mutagenesis site" description="Abolished protein N(5)-glutamine methyltransferase activity." evidence="13">
    <original>E</original>
    <variation>K</variation>
    <location>
        <position position="27"/>
    </location>
</feature>
<feature type="mutagenesis site" description="Abolished protein N(5)-glutamine methyltransferase activity." evidence="13">
    <original>D</original>
    <variation>N</variation>
    <location>
        <position position="28"/>
    </location>
</feature>
<feature type="mutagenesis site" description="Abolished protein N(5)-glutamine methyltransferase activity." evidence="13">
    <original>E</original>
    <variation>A</variation>
    <location>
        <position position="51"/>
    </location>
</feature>
<feature type="mutagenesis site" description="Strongly reduced protein N(5)-glutamine methyltransferase activity." evidence="13">
    <original>L</original>
    <variation>D</variation>
    <location>
        <position position="72"/>
    </location>
</feature>
<feature type="mutagenesis site" description="Abolished protein N(5)-glutamine methyltransferase activity." evidence="13">
    <original>D</original>
    <variation>A</variation>
    <location>
        <position position="77"/>
    </location>
</feature>
<feature type="mutagenesis site" description="Abolished protein N(5)-glutamine methyltransferase activity." evidence="13">
    <original>I</original>
    <variation>A</variation>
    <location>
        <position position="78"/>
    </location>
</feature>
<feature type="mutagenesis site" description="Strongly reduced protein N(5)-glutamine methyltransferase activity." evidence="13">
    <original>A</original>
    <variation>D</variation>
    <location>
        <position position="83"/>
    </location>
</feature>
<feature type="mutagenesis site" description="Abolished protein N(5)-glutamine methyltransferase activity. Abolished histone-lysine methyltransferase activity." evidence="10 13">
    <original>D</original>
    <variation>A</variation>
    <location>
        <position position="103"/>
    </location>
</feature>
<feature type="mutagenesis site" description="Strongly reduced protein N(5)-glutamine methyltransferase activity." evidence="13">
    <original>L</original>
    <variation>D</variation>
    <location>
        <position position="108"/>
    </location>
</feature>
<feature type="mutagenesis site" description="Abolished DNA methyltransferase activity." evidence="8">
    <original>NPPY</original>
    <variation>AAAA</variation>
    <location>
        <begin position="122"/>
        <end position="125"/>
    </location>
</feature>
<feature type="mutagenesis site" description="Abolished protein N(5)-glutamine methyltransferase activity. Abolished histone-lysine methyltransferase activity." evidence="10 13">
    <original>N</original>
    <variation>A</variation>
    <location>
        <position position="122"/>
    </location>
</feature>
<feature type="mutagenesis site" description="Abolished protein N(5)-glutamine methyltransferase activity without affecting histone-lysine methyltransferase activity." evidence="10">
    <original>Y</original>
    <variation>A</variation>
    <location>
        <position position="125"/>
    </location>
</feature>
<feature type="mutagenesis site" description="Abolished protein N(5)-glutamine methyltransferase activity." evidence="13">
    <original>E</original>
    <variation>K</variation>
    <location>
        <position position="132"/>
    </location>
</feature>
<feature type="mutagenesis site" description="Reduced protein N(5)-glutamine methyltransferase activity." evidence="13">
    <original>E</original>
    <variation>K</variation>
    <location>
        <position position="139"/>
    </location>
</feature>
<feature type="mutagenesis site" description="Slightly reduced protein N(5)-glutamine methyltransferase activity." evidence="13">
    <original>R</original>
    <variation>A</variation>
    <location>
        <position position="154"/>
    </location>
</feature>
<feature type="mutagenesis site" description="Abolished protein N(5)-glutamine methyltransferase activity." evidence="13">
    <original>E</original>
    <variation>K</variation>
    <location>
        <position position="176"/>
    </location>
</feature>
<feature type="mutagenesis site" description="Abolished protein N(5)-glutamine methyltransferase activity." evidence="13">
    <original>E</original>
    <variation>K</variation>
    <location>
        <position position="204"/>
    </location>
</feature>
<feature type="turn" evidence="32">
    <location>
        <begin position="12"/>
        <end position="15"/>
    </location>
</feature>
<feature type="helix" evidence="32">
    <location>
        <begin position="17"/>
        <end position="19"/>
    </location>
</feature>
<feature type="helix" evidence="33">
    <location>
        <begin position="27"/>
        <end position="38"/>
    </location>
</feature>
<feature type="helix" evidence="33">
    <location>
        <begin position="41"/>
        <end position="43"/>
    </location>
</feature>
<feature type="strand" evidence="33">
    <location>
        <begin position="47"/>
        <end position="53"/>
    </location>
</feature>
<feature type="helix" evidence="33">
    <location>
        <begin position="58"/>
        <end position="67"/>
    </location>
</feature>
<feature type="strand" evidence="33">
    <location>
        <begin position="71"/>
        <end position="79"/>
    </location>
</feature>
<feature type="helix" evidence="33">
    <location>
        <begin position="80"/>
        <end position="92"/>
    </location>
</feature>
<feature type="strand" evidence="33">
    <location>
        <begin position="98"/>
        <end position="103"/>
    </location>
</feature>
<feature type="turn" evidence="33">
    <location>
        <begin position="104"/>
        <end position="115"/>
    </location>
</feature>
<feature type="strand" evidence="33">
    <location>
        <begin position="116"/>
        <end position="121"/>
    </location>
</feature>
<feature type="helix" evidence="33">
    <location>
        <begin position="130"/>
        <end position="132"/>
    </location>
</feature>
<feature type="helix" evidence="33">
    <location>
        <begin position="138"/>
        <end position="141"/>
    </location>
</feature>
<feature type="helix" evidence="33">
    <location>
        <begin position="146"/>
        <end position="148"/>
    </location>
</feature>
<feature type="helix" evidence="33">
    <location>
        <begin position="150"/>
        <end position="155"/>
    </location>
</feature>
<feature type="helix" evidence="33">
    <location>
        <begin position="156"/>
        <end position="158"/>
    </location>
</feature>
<feature type="helix" evidence="33">
    <location>
        <begin position="159"/>
        <end position="162"/>
    </location>
</feature>
<feature type="strand" evidence="33">
    <location>
        <begin position="163"/>
        <end position="174"/>
    </location>
</feature>
<feature type="helix" evidence="33">
    <location>
        <begin position="175"/>
        <end position="177"/>
    </location>
</feature>
<feature type="helix" evidence="33">
    <location>
        <begin position="179"/>
        <end position="188"/>
    </location>
</feature>
<feature type="strand" evidence="33">
    <location>
        <begin position="192"/>
        <end position="201"/>
    </location>
</feature>
<feature type="strand" evidence="33">
    <location>
        <begin position="204"/>
        <end position="212"/>
    </location>
</feature>
<protein>
    <recommendedName>
        <fullName evidence="22">Methyltransferase HEMK2</fullName>
    </recommendedName>
    <alternativeName>
        <fullName evidence="18">HemK methyltransferase family member 2</fullName>
        <shortName>M.HsaHemK2P</shortName>
    </alternativeName>
    <alternativeName>
        <fullName evidence="20">Lysine N-methyltransferase 9</fullName>
        <ecNumber evidence="10 24">2.1.1.-</ecNumber>
    </alternativeName>
    <alternativeName>
        <fullName>Methylarsonite methyltransferase N6AMT1</fullName>
        <ecNumber evidence="5 7">2.1.1.-</ecNumber>
    </alternativeName>
    <alternativeName>
        <fullName evidence="22">Methyltransferase N6AMT1</fullName>
    </alternativeName>
    <alternativeName>
        <fullName evidence="22">Protein N(5)-glutamine methyltransferase</fullName>
        <ecNumber evidence="3 10 13 24">2.1.1.-</ecNumber>
    </alternativeName>
</protein>
<sequence length="214" mass="22957">MAGENFATPFHGHVGRGAFSDVYEPAEDTFLLLDALEAAAAELAGVEICLEVGSGSGVVSAFLASMIGPQALYMCTDINPEAAACTLETARCNKVHIQPVITDLVKGLLPRLTEKVDLLVFNPPYVVTPPQEVGSHGIEAAWAGGRNGREVMDRFFPLVPDLLSPRGLFYLVTIKENNPEEILKIMKTKGLQGTTALSRQAGQETLSVLKFTKS</sequence>
<accession>Q9Y5N5</accession>
<accession>B2RA97</accession>
<accession>Q96F73</accession>
<reference key="1">
    <citation type="submission" date="1999-03" db="EMBL/GenBank/DDBJ databases">
        <title>Identification of a novel putative eukaryotic DNA-methyltransferase.</title>
        <authorList>
            <person name="Reboul J."/>
            <person name="Misseri Y."/>
            <person name="Bonnerot C."/>
            <person name="Mogensen E."/>
            <person name="Lutfalla G."/>
        </authorList>
    </citation>
    <scope>NUCLEOTIDE SEQUENCE [MRNA] (ISOFORM 1)</scope>
</reference>
<reference key="2">
    <citation type="journal article" date="2004" name="Nat. Genet.">
        <title>Complete sequencing and characterization of 21,243 full-length human cDNAs.</title>
        <authorList>
            <person name="Ota T."/>
            <person name="Suzuki Y."/>
            <person name="Nishikawa T."/>
            <person name="Otsuki T."/>
            <person name="Sugiyama T."/>
            <person name="Irie R."/>
            <person name="Wakamatsu A."/>
            <person name="Hayashi K."/>
            <person name="Sato H."/>
            <person name="Nagai K."/>
            <person name="Kimura K."/>
            <person name="Makita H."/>
            <person name="Sekine M."/>
            <person name="Obayashi M."/>
            <person name="Nishi T."/>
            <person name="Shibahara T."/>
            <person name="Tanaka T."/>
            <person name="Ishii S."/>
            <person name="Yamamoto J."/>
            <person name="Saito K."/>
            <person name="Kawai Y."/>
            <person name="Isono Y."/>
            <person name="Nakamura Y."/>
            <person name="Nagahari K."/>
            <person name="Murakami K."/>
            <person name="Yasuda T."/>
            <person name="Iwayanagi T."/>
            <person name="Wagatsuma M."/>
            <person name="Shiratori A."/>
            <person name="Sudo H."/>
            <person name="Hosoiri T."/>
            <person name="Kaku Y."/>
            <person name="Kodaira H."/>
            <person name="Kondo H."/>
            <person name="Sugawara M."/>
            <person name="Takahashi M."/>
            <person name="Kanda K."/>
            <person name="Yokoi T."/>
            <person name="Furuya T."/>
            <person name="Kikkawa E."/>
            <person name="Omura Y."/>
            <person name="Abe K."/>
            <person name="Kamihara K."/>
            <person name="Katsuta N."/>
            <person name="Sato K."/>
            <person name="Tanikawa M."/>
            <person name="Yamazaki M."/>
            <person name="Ninomiya K."/>
            <person name="Ishibashi T."/>
            <person name="Yamashita H."/>
            <person name="Murakawa K."/>
            <person name="Fujimori K."/>
            <person name="Tanai H."/>
            <person name="Kimata M."/>
            <person name="Watanabe M."/>
            <person name="Hiraoka S."/>
            <person name="Chiba Y."/>
            <person name="Ishida S."/>
            <person name="Ono Y."/>
            <person name="Takiguchi S."/>
            <person name="Watanabe S."/>
            <person name="Yosida M."/>
            <person name="Hotuta T."/>
            <person name="Kusano J."/>
            <person name="Kanehori K."/>
            <person name="Takahashi-Fujii A."/>
            <person name="Hara H."/>
            <person name="Tanase T.-O."/>
            <person name="Nomura Y."/>
            <person name="Togiya S."/>
            <person name="Komai F."/>
            <person name="Hara R."/>
            <person name="Takeuchi K."/>
            <person name="Arita M."/>
            <person name="Imose N."/>
            <person name="Musashino K."/>
            <person name="Yuuki H."/>
            <person name="Oshima A."/>
            <person name="Sasaki N."/>
            <person name="Aotsuka S."/>
            <person name="Yoshikawa Y."/>
            <person name="Matsunawa H."/>
            <person name="Ichihara T."/>
            <person name="Shiohata N."/>
            <person name="Sano S."/>
            <person name="Moriya S."/>
            <person name="Momiyama H."/>
            <person name="Satoh N."/>
            <person name="Takami S."/>
            <person name="Terashima Y."/>
            <person name="Suzuki O."/>
            <person name="Nakagawa S."/>
            <person name="Senoh A."/>
            <person name="Mizoguchi H."/>
            <person name="Goto Y."/>
            <person name="Shimizu F."/>
            <person name="Wakebe H."/>
            <person name="Hishigaki H."/>
            <person name="Watanabe T."/>
            <person name="Sugiyama A."/>
            <person name="Takemoto M."/>
            <person name="Kawakami B."/>
            <person name="Yamazaki M."/>
            <person name="Watanabe K."/>
            <person name="Kumagai A."/>
            <person name="Itakura S."/>
            <person name="Fukuzumi Y."/>
            <person name="Fujimori Y."/>
            <person name="Komiyama M."/>
            <person name="Tashiro H."/>
            <person name="Tanigami A."/>
            <person name="Fujiwara T."/>
            <person name="Ono T."/>
            <person name="Yamada K."/>
            <person name="Fujii Y."/>
            <person name="Ozaki K."/>
            <person name="Hirao M."/>
            <person name="Ohmori Y."/>
            <person name="Kawabata A."/>
            <person name="Hikiji T."/>
            <person name="Kobatake N."/>
            <person name="Inagaki H."/>
            <person name="Ikema Y."/>
            <person name="Okamoto S."/>
            <person name="Okitani R."/>
            <person name="Kawakami T."/>
            <person name="Noguchi S."/>
            <person name="Itoh T."/>
            <person name="Shigeta K."/>
            <person name="Senba T."/>
            <person name="Matsumura K."/>
            <person name="Nakajima Y."/>
            <person name="Mizuno T."/>
            <person name="Morinaga M."/>
            <person name="Sasaki M."/>
            <person name="Togashi T."/>
            <person name="Oyama M."/>
            <person name="Hata H."/>
            <person name="Watanabe M."/>
            <person name="Komatsu T."/>
            <person name="Mizushima-Sugano J."/>
            <person name="Satoh T."/>
            <person name="Shirai Y."/>
            <person name="Takahashi Y."/>
            <person name="Nakagawa K."/>
            <person name="Okumura K."/>
            <person name="Nagase T."/>
            <person name="Nomura N."/>
            <person name="Kikuchi H."/>
            <person name="Masuho Y."/>
            <person name="Yamashita R."/>
            <person name="Nakai K."/>
            <person name="Yada T."/>
            <person name="Nakamura Y."/>
            <person name="Ohara O."/>
            <person name="Isogai T."/>
            <person name="Sugano S."/>
        </authorList>
    </citation>
    <scope>NUCLEOTIDE SEQUENCE [LARGE SCALE MRNA]</scope>
    <source>
        <tissue>Cerebellum</tissue>
    </source>
</reference>
<reference key="3">
    <citation type="journal article" date="2000" name="Nature">
        <title>The DNA sequence of human chromosome 21.</title>
        <authorList>
            <person name="Hattori M."/>
            <person name="Fujiyama A."/>
            <person name="Taylor T.D."/>
            <person name="Watanabe H."/>
            <person name="Yada T."/>
            <person name="Park H.-S."/>
            <person name="Toyoda A."/>
            <person name="Ishii K."/>
            <person name="Totoki Y."/>
            <person name="Choi D.-K."/>
            <person name="Groner Y."/>
            <person name="Soeda E."/>
            <person name="Ohki M."/>
            <person name="Takagi T."/>
            <person name="Sakaki Y."/>
            <person name="Taudien S."/>
            <person name="Blechschmidt K."/>
            <person name="Polley A."/>
            <person name="Menzel U."/>
            <person name="Delabar J."/>
            <person name="Kumpf K."/>
            <person name="Lehmann R."/>
            <person name="Patterson D."/>
            <person name="Reichwald K."/>
            <person name="Rump A."/>
            <person name="Schillhabel M."/>
            <person name="Schudy A."/>
            <person name="Zimmermann W."/>
            <person name="Rosenthal A."/>
            <person name="Kudoh J."/>
            <person name="Shibuya K."/>
            <person name="Kawasaki K."/>
            <person name="Asakawa S."/>
            <person name="Shintani A."/>
            <person name="Sasaki T."/>
            <person name="Nagamine K."/>
            <person name="Mitsuyama S."/>
            <person name="Antonarakis S.E."/>
            <person name="Minoshima S."/>
            <person name="Shimizu N."/>
            <person name="Nordsiek G."/>
            <person name="Hornischer K."/>
            <person name="Brandt P."/>
            <person name="Scharfe M."/>
            <person name="Schoen O."/>
            <person name="Desario A."/>
            <person name="Reichelt J."/>
            <person name="Kauer G."/>
            <person name="Bloecker H."/>
            <person name="Ramser J."/>
            <person name="Beck A."/>
            <person name="Klages S."/>
            <person name="Hennig S."/>
            <person name="Riesselmann L."/>
            <person name="Dagand E."/>
            <person name="Wehrmeyer S."/>
            <person name="Borzym K."/>
            <person name="Gardiner K."/>
            <person name="Nizetic D."/>
            <person name="Francis F."/>
            <person name="Lehrach H."/>
            <person name="Reinhardt R."/>
            <person name="Yaspo M.-L."/>
        </authorList>
    </citation>
    <scope>NUCLEOTIDE SEQUENCE [LARGE SCALE GENOMIC DNA]</scope>
    <scope>VARIANTS LYS-146 AND LYS-166</scope>
</reference>
<reference key="4">
    <citation type="submission" date="2005-07" db="EMBL/GenBank/DDBJ databases">
        <authorList>
            <person name="Mural R.J."/>
            <person name="Istrail S."/>
            <person name="Sutton G.G."/>
            <person name="Florea L."/>
            <person name="Halpern A.L."/>
            <person name="Mobarry C.M."/>
            <person name="Lippert R."/>
            <person name="Walenz B."/>
            <person name="Shatkay H."/>
            <person name="Dew I."/>
            <person name="Miller J.R."/>
            <person name="Flanigan M.J."/>
            <person name="Edwards N.J."/>
            <person name="Bolanos R."/>
            <person name="Fasulo D."/>
            <person name="Halldorsson B.V."/>
            <person name="Hannenhalli S."/>
            <person name="Turner R."/>
            <person name="Yooseph S."/>
            <person name="Lu F."/>
            <person name="Nusskern D.R."/>
            <person name="Shue B.C."/>
            <person name="Zheng X.H."/>
            <person name="Zhong F."/>
            <person name="Delcher A.L."/>
            <person name="Huson D.H."/>
            <person name="Kravitz S.A."/>
            <person name="Mouchard L."/>
            <person name="Reinert K."/>
            <person name="Remington K.A."/>
            <person name="Clark A.G."/>
            <person name="Waterman M.S."/>
            <person name="Eichler E.E."/>
            <person name="Adams M.D."/>
            <person name="Hunkapiller M.W."/>
            <person name="Myers E.W."/>
            <person name="Venter J.C."/>
        </authorList>
    </citation>
    <scope>NUCLEOTIDE SEQUENCE [LARGE SCALE GENOMIC DNA]</scope>
</reference>
<reference key="5">
    <citation type="journal article" date="2004" name="Genome Res.">
        <title>The status, quality, and expansion of the NIH full-length cDNA project: the Mammalian Gene Collection (MGC).</title>
        <authorList>
            <consortium name="The MGC Project Team"/>
        </authorList>
    </citation>
    <scope>NUCLEOTIDE SEQUENCE [LARGE SCALE MRNA] (ISOFORM 2)</scope>
    <source>
        <tissue>Skin</tissue>
    </source>
</reference>
<reference key="6">
    <citation type="journal article" date="2008" name="FEBS Lett.">
        <title>HemK2 protein, encoded on human chromosome 21, methylates translation termination factor eRF1.</title>
        <authorList>
            <person name="Figaro S."/>
            <person name="Scrima N."/>
            <person name="Buckingham R.H."/>
            <person name="Heurgue-Hamard V."/>
        </authorList>
    </citation>
    <scope>FUNCTION</scope>
    <scope>CATALYTIC ACTIVITY</scope>
    <scope>INTERACTION WITH TRMT112</scope>
</reference>
<reference key="7">
    <citation type="journal article" date="2010" name="Mol. Cell. Biol.">
        <title>Deficiency in a glutamine-specific methyltransferase for release factor causes mouse embryonic lethality.</title>
        <authorList>
            <person name="Liu P."/>
            <person name="Nie S."/>
            <person name="Li B."/>
            <person name="Yang Z.Q."/>
            <person name="Xu Z.M."/>
            <person name="Fei J."/>
            <person name="Lin C."/>
            <person name="Zeng R."/>
            <person name="Xu G.L."/>
        </authorList>
    </citation>
    <scope>FUNCTION</scope>
</reference>
<reference key="8">
    <citation type="journal article" date="2011" name="BMC Syst. Biol.">
        <title>Initial characterization of the human central proteome.</title>
        <authorList>
            <person name="Burkard T.R."/>
            <person name="Planyavsky M."/>
            <person name="Kaupe I."/>
            <person name="Breitwieser F.P."/>
            <person name="Buerckstuemmer T."/>
            <person name="Bennett K.L."/>
            <person name="Superti-Furga G."/>
            <person name="Colinge J."/>
        </authorList>
    </citation>
    <scope>IDENTIFICATION BY MASS SPECTROMETRY [LARGE SCALE ANALYSIS]</scope>
</reference>
<reference key="9">
    <citation type="journal article" date="2011" name="Environ. Health Perspect.">
        <title>Involvement of N-6 adenine-specific DNA methyltransferase 1 (N6AMT1) in arsenic biomethylation and its role in arsenic-induced toxicity.</title>
        <authorList>
            <person name="Ren X."/>
            <person name="Aleshin M."/>
            <person name="Jo W.J."/>
            <person name="Dills R."/>
            <person name="Kalman D.A."/>
            <person name="Vulpe C.D."/>
            <person name="Smith M.T."/>
            <person name="Zhang L."/>
        </authorList>
    </citation>
    <scope>FUNCTION</scope>
    <scope>TISSUE SPECIFICITY</scope>
</reference>
<reference key="10">
    <citation type="journal article" date="2015" name="Mol. Biol. Cell">
        <title>The human 18S rRNA base methyltransferases DIMT1L and WBSCR22-TRMT112 but not rRNA modification are required for ribosome biogenesis.</title>
        <authorList>
            <person name="Zorbas C."/>
            <person name="Nicolas E."/>
            <person name="Wacheul L."/>
            <person name="Huvelle E."/>
            <person name="Heurgue-Hamard V."/>
            <person name="Lafontaine D.L."/>
        </authorList>
    </citation>
    <scope>SUBUNIT</scope>
</reference>
<reference key="11">
    <citation type="journal article" date="2015" name="Toxicol. Sci.">
        <title>Interactive effects of N6AMT1 and As3MT in arsenic biomethylation.</title>
        <authorList>
            <person name="Zhang H."/>
            <person name="Ge Y."/>
            <person name="He P."/>
            <person name="Chen X."/>
            <person name="Carina A."/>
            <person name="Qiu Y."/>
            <person name="Aga D.S."/>
            <person name="Ren X."/>
        </authorList>
    </citation>
    <scope>FUNCTION</scope>
    <scope>CATALYTIC ACTIVITY</scope>
</reference>
<reference key="12">
    <citation type="journal article" date="2018" name="Cell">
        <title>N6-methyladenine DNA modification in glioblastoma.</title>
        <authorList>
            <person name="Xie Q."/>
            <person name="Wu T.P."/>
            <person name="Gimple R.C."/>
            <person name="Li Z."/>
            <person name="Prager B.C."/>
            <person name="Wu Q."/>
            <person name="Yu Y."/>
            <person name="Wang P."/>
            <person name="Wang Y."/>
            <person name="Gorkin D.U."/>
            <person name="Zhang C."/>
            <person name="Dowiak A.V."/>
            <person name="Lin K."/>
            <person name="Zeng C."/>
            <person name="Sui Y."/>
            <person name="Kim L.J.Y."/>
            <person name="Miller T.E."/>
            <person name="Jiang L."/>
            <person name="Lee C.H."/>
            <person name="Huang Z."/>
            <person name="Fang X."/>
            <person name="Zhai K."/>
            <person name="Mack S.C."/>
            <person name="Sander M."/>
            <person name="Bao S."/>
            <person name="Kerstetter-Fogle A.E."/>
            <person name="Sloan A.E."/>
            <person name="Xiao A.Z."/>
            <person name="Rich J.N."/>
        </authorList>
    </citation>
    <scope>CAUTION</scope>
</reference>
<reference key="13">
    <citation type="journal article" date="2018" name="Mol. Cell">
        <title>N6-methyladenine DNA modification in the human genome.</title>
        <authorList>
            <person name="Xiao C.L."/>
            <person name="Zhu S."/>
            <person name="He M."/>
            <person name="Chen D."/>
            <person name="Zhang Q."/>
            <person name="Chen Y."/>
            <person name="Yu G."/>
            <person name="Liu J."/>
            <person name="Xie S.Q."/>
            <person name="Luo F."/>
            <person name="Liang Z."/>
            <person name="Wang D.P."/>
            <person name="Bo X.C."/>
            <person name="Gu X.F."/>
            <person name="Wang K."/>
            <person name="Yan G.R."/>
        </authorList>
    </citation>
    <scope>MUTAGENESIS OF 122-ASN--TYR-125</scope>
</reference>
<reference key="14">
    <citation type="journal article" date="2019" name="Biomolecules">
        <title>The Common Partner of Several Methyltransferases TRMT112 Regulates the Expression of N6AMT1 Isoforms in Mammalian Cells.</title>
        <authorList>
            <person name="Leetsi L."/>
            <person name="Ounap K."/>
            <person name="Abroi A."/>
            <person name="Kurg R."/>
        </authorList>
    </citation>
    <scope>ALTERNATIVE SPLICING (ISOFORMS 1 AND 2)</scope>
    <scope>INTERACTION WITH TRMT112</scope>
    <scope>UBIQUITINATION</scope>
</reference>
<reference key="15">
    <citation type="journal article" date="2019" name="Cell Discov.">
        <title>Human HemK2/KMT9/N6AMT1 is an active protein methyltransferase, but does not act on DNA in vitro, in the presence of Trm112.</title>
        <authorList>
            <person name="Woodcock C.B."/>
            <person name="Yu D."/>
            <person name="Zhang X."/>
            <person name="Cheng X."/>
        </authorList>
    </citation>
    <scope>FUNCTION</scope>
    <scope>CATALYTIC ACTIVITY</scope>
    <scope>INTERACTION WITH TRMT112</scope>
</reference>
<reference key="16">
    <citation type="journal article" date="2020" name="Nat. Chem. Biol.">
        <title>The origin of genomic N6-methyl-deoxyadenosine in mammalian cells.</title>
        <authorList>
            <person name="Musheev M.U."/>
            <person name="Baumgaertner A."/>
            <person name="Krebs L."/>
            <person name="Niehrs C."/>
        </authorList>
    </citation>
    <scope>FUNCTION</scope>
    <scope>CAUTION</scope>
</reference>
<reference key="17">
    <citation type="journal article" date="2021" name="Int. J. Mol. Sci.">
        <title>Human TRMT112-Methyltransferase Network Consists of Seven Partners Interacting with a Common Co-Factor.</title>
        <authorList>
            <person name="Brumele B."/>
            <person name="Mutso M."/>
            <person name="Telanne L."/>
            <person name="Ounap K."/>
            <person name="Spunde K."/>
            <person name="Abroi A."/>
            <person name="Kurg R."/>
        </authorList>
    </citation>
    <scope>INTERACTION WITH TRMT112</scope>
</reference>
<reference evidence="30 31" key="18">
    <citation type="journal article" date="2019" name="Cell Discov.">
        <title>Structural insight into human N6amt1-Trm112 complex functioning as a protein methyltransferase.</title>
        <authorList>
            <person name="Li W."/>
            <person name="Shi Y."/>
            <person name="Zhang T."/>
            <person name="Ye J."/>
            <person name="Ding J."/>
        </authorList>
    </citation>
    <scope>X-RAY CRYSTALLOGRAPHY (2.00 ANGSTROMS) IN COMPLEX WITH S-ADENOSYLMETHIONINE AND TRMT112</scope>
    <scope>FUNCTION</scope>
    <scope>CATALYTIC ACTIVITY</scope>
    <scope>INTERACTION WITH TRMT112</scope>
    <scope>MUTAGENESIS OF GLU-24; GLU-27; ASP-28; GLU-51; LEU-72; ASP-77; ILE-78; ALA-83; ASP-103; LEU-108; ASN-122; GLU-132; GLU-139; ARG-154; GLU-176 AND GLU-204</scope>
</reference>
<reference evidence="26 27" key="19">
    <citation type="journal article" date="2019" name="Nat. Struct. Mol. Biol.">
        <title>KMT9 monomethylates histone H4 lysine 12 and controls proliferation of prostate cancer cells.</title>
        <authorList>
            <person name="Metzger E."/>
            <person name="Wang S."/>
            <person name="Urban S."/>
            <person name="Willmann D."/>
            <person name="Schmidt A."/>
            <person name="Offermann A."/>
            <person name="Allen A."/>
            <person name="Sum M."/>
            <person name="Obier N."/>
            <person name="Cottard F."/>
            <person name="Ulferts S."/>
            <person name="Preca B.T."/>
            <person name="Hermann B."/>
            <person name="Maurer J."/>
            <person name="Greschik H."/>
            <person name="Hornung V."/>
            <person name="Einsle O."/>
            <person name="Perner S."/>
            <person name="Imhof A."/>
            <person name="Jung M."/>
            <person name="Schule R."/>
        </authorList>
    </citation>
    <scope>X-RAY CRYSTALLOGRAPHY (1.90 ANGSTROMS) OF 8-214 IN COMPLEXES WITH S-ADENOSYL-L-HOMOCYSTEINE; A HISTONE H4 PEPTIDE AND TRMT112</scope>
    <scope>FUNCTION</scope>
    <scope>CATALYTIC ACTIVITY</scope>
    <scope>INTERACTION WITH TRMT112</scope>
    <scope>MUTAGENESIS OF ASP-103; ASN-122 AND TYR-125</scope>
</reference>
<reference evidence="28 29" key="20">
    <citation type="journal article" date="2020" name="Biochem. J.">
        <title>Structural insight into HEMK2-TRMT112-mediated glutamine methylation.</title>
        <authorList>
            <person name="Gao J."/>
            <person name="Wang B."/>
            <person name="Yu H."/>
            <person name="Wu G."/>
            <person name="Wan C."/>
            <person name="Liu W."/>
            <person name="Liao S."/>
            <person name="Cheng L."/>
            <person name="Zhu Z."/>
        </authorList>
    </citation>
    <scope>X-RAY CRYSTALLOGRAPHY (2.20 ANGSTROMS) OF 2-214 IN COMPLEX WITH S-ADENOSYLMETHIONINE AND TRMT112</scope>
    <scope>INTERACTION WITH TRMT112</scope>
</reference>
<gene>
    <name evidence="18 25" type="primary">HEMK2</name>
    <name evidence="25" type="synonym">C21orf127</name>
    <name evidence="20" type="synonym">KMT9</name>
    <name evidence="19" type="synonym">N6AMT1</name>
    <name evidence="1" type="synonym">PRED28</name>
</gene>
<comment type="function">
    <text evidence="3 4 5 7 8 10 12 13">Methyltransferase that can methylate proteins and, to a lower extent, arsenic (PubMed:18539146, PubMed:21193388, PubMed:30017583, PubMed:31061526, PubMed:31636962). Catalytic subunit of a heterodimer with TRMT112, which monomethylates 'Lys-12' of histone H4 (H4K12me1), a modification present at the promoters of numerous genes encoding cell cycle regulators (PubMed:31061526). Catalytic subunit of a heterodimer with TRMT112, which catalyzes N5-methylation of Glu residue of proteins with a Gly-Gln-Xaa-Xaa-Xaa-Arg motif (PubMed:18539146, PubMed:31632689, PubMed:31636962). Methylates ETF1 on 'Gln-185'; ETF1 needs to be complexed to ERF3 in its GTP-bound form to be efficiently methylated (PubMed:18539146, PubMed:20606008, PubMed:31061526, PubMed:31636962). May also play a role in the modulation of arsenic-induced toxicity by mediating the conversion of monomethylarsonous acid (3+) into the less toxic dimethylarsonic acid (PubMed:21193388, PubMed:25997655). It however only plays a limited role in arsenic metabolism compared with AS3MT (PubMed:25997655).</text>
</comment>
<comment type="catalytic activity">
    <reaction evidence="10 24">
        <text>L-lysyl-[histone] + S-adenosyl-L-methionine = N(6)-methyl-L-lysyl-[histone] + S-adenosyl-L-homocysteine + H(+)</text>
        <dbReference type="Rhea" id="RHEA:10024"/>
        <dbReference type="Rhea" id="RHEA-COMP:9845"/>
        <dbReference type="Rhea" id="RHEA-COMP:9846"/>
        <dbReference type="ChEBI" id="CHEBI:15378"/>
        <dbReference type="ChEBI" id="CHEBI:29969"/>
        <dbReference type="ChEBI" id="CHEBI:57856"/>
        <dbReference type="ChEBI" id="CHEBI:59789"/>
        <dbReference type="ChEBI" id="CHEBI:61929"/>
    </reaction>
    <physiologicalReaction direction="left-to-right" evidence="10 24">
        <dbReference type="Rhea" id="RHEA:10025"/>
    </physiologicalReaction>
</comment>
<comment type="catalytic activity">
    <reaction evidence="3 10 13 24">
        <text>L-glutaminyl-[protein] + S-adenosyl-L-methionine = N(5)-methyl-L-glutaminyl-[protein] + S-adenosyl-L-homocysteine + H(+)</text>
        <dbReference type="Rhea" id="RHEA:57452"/>
        <dbReference type="Rhea" id="RHEA-COMP:10207"/>
        <dbReference type="Rhea" id="RHEA-COMP:14895"/>
        <dbReference type="ChEBI" id="CHEBI:15378"/>
        <dbReference type="ChEBI" id="CHEBI:30011"/>
        <dbReference type="ChEBI" id="CHEBI:57856"/>
        <dbReference type="ChEBI" id="CHEBI:59789"/>
        <dbReference type="ChEBI" id="CHEBI:61891"/>
    </reaction>
    <physiologicalReaction direction="left-to-right" evidence="3 10 13 24">
        <dbReference type="Rhea" id="RHEA:57453"/>
    </physiologicalReaction>
</comment>
<comment type="catalytic activity">
    <reaction evidence="5 7">
        <text>methylarsonous acid + S-adenosyl-L-methionine = dimethylarsinate + S-adenosyl-L-homocysteine + 2 H(+)</text>
        <dbReference type="Rhea" id="RHEA:11684"/>
        <dbReference type="ChEBI" id="CHEBI:15378"/>
        <dbReference type="ChEBI" id="CHEBI:16223"/>
        <dbReference type="ChEBI" id="CHEBI:17826"/>
        <dbReference type="ChEBI" id="CHEBI:57856"/>
        <dbReference type="ChEBI" id="CHEBI:59789"/>
    </reaction>
</comment>
<comment type="subunit">
    <text evidence="3 6 10 11 12 13 15 16">Heterodimer; heterodimerization with TRMT112 is required for S-adenosyl-L-methionine-binding.</text>
</comment>
<comment type="subunit">
    <molecule>Isoform 2</molecule>
    <text evidence="11">Does not interact with TRMT112.</text>
</comment>
<comment type="interaction">
    <interactant intactId="EBI-7966667">
        <id>Q9Y5N5</id>
    </interactant>
    <interactant intactId="EBI-373326">
        <id>Q9UI30</id>
        <label>TRMT112</label>
    </interactant>
    <organismsDiffer>false</organismsDiffer>
    <experiments>7</experiments>
</comment>
<comment type="subcellular location">
    <subcellularLocation>
        <location evidence="1">Nucleus</location>
    </subcellularLocation>
</comment>
<comment type="alternative products">
    <event type="alternative splicing"/>
    <isoform>
        <id>Q9Y5N5-1</id>
        <name evidence="21">1</name>
        <name evidence="18">Alpha</name>
        <name evidence="21">N6AMT1iso1</name>
        <sequence type="displayed"/>
    </isoform>
    <isoform>
        <id>Q9Y5N5-2</id>
        <name evidence="21">2</name>
        <name evidence="18">Beta</name>
        <name evidence="21">N6AMT1iso2</name>
        <sequence type="described" ref="VSP_040294"/>
    </isoform>
</comment>
<comment type="tissue specificity">
    <text evidence="5">Widely expressed, with highest expression in parathyroid and pituitary glands, followed by adrenal gland and kidney, and lowest expression in leukocytes and mammary gland.</text>
</comment>
<comment type="PTM">
    <molecule>Isoform 1</molecule>
    <text evidence="11">Ubiquitinated, leading to its degradation by the proteasome.</text>
</comment>
<comment type="PTM">
    <molecule>Isoform 2</molecule>
    <text evidence="11">Ubiquitinated, leading to its degradation by the proteasome.</text>
</comment>
<comment type="similarity">
    <text evidence="22">Belongs to the eukaryotic/archaeal PrmC-related family.</text>
</comment>
<comment type="caution">
    <text evidence="8 9 12 13 14">Was reported to have N(6)-adenine-specific DNA methyltransferase by mediating methylation of DNA on the 6th position of adenine (N(6)-methyladenosine) (PubMed:30017583). The existence of N(6)-methyladenosine on DNA is unclear in mammals (PubMed:32203414). According to a report, the majority of N(6)-methyladenosine in DNA originates from RNA catabolism via a nucleotide salvage pathway and is misincorporated by DNA polymerases, arguing against a role as epigenetic DNA mark in mammalian cells (PubMed:32203414). Moreover, subsequent studies could not confirm the role of HEMK2 as a N(6)-adenine-specific DNA methyltransferase (PubMed:30392959, PubMed:31632689, PubMed:31636962).</text>
</comment>
<keyword id="KW-0002">3D-structure</keyword>
<keyword id="KW-0025">Alternative splicing</keyword>
<keyword id="KW-0156">Chromatin regulator</keyword>
<keyword id="KW-0489">Methyltransferase</keyword>
<keyword id="KW-0539">Nucleus</keyword>
<keyword id="KW-1267">Proteomics identification</keyword>
<keyword id="KW-1185">Reference proteome</keyword>
<keyword id="KW-0949">S-adenosyl-L-methionine</keyword>
<keyword id="KW-0808">Transferase</keyword>
<keyword id="KW-0832">Ubl conjugation</keyword>
<proteinExistence type="evidence at protein level"/>
<dbReference type="EC" id="2.1.1.-" evidence="10 24 5 7 3 13"/>
<dbReference type="EMBL" id="AF139682">
    <property type="protein sequence ID" value="AAD38520.1"/>
    <property type="molecule type" value="mRNA"/>
</dbReference>
<dbReference type="EMBL" id="AK314100">
    <property type="protein sequence ID" value="BAG36794.1"/>
    <property type="molecule type" value="mRNA"/>
</dbReference>
<dbReference type="EMBL" id="AF227510">
    <property type="status" value="NOT_ANNOTATED_CDS"/>
    <property type="molecule type" value="Genomic_DNA"/>
</dbReference>
<dbReference type="EMBL" id="AL163248">
    <property type="protein sequence ID" value="CAB90428.1"/>
    <property type="molecule type" value="Genomic_DNA"/>
</dbReference>
<dbReference type="EMBL" id="AMYH02037685">
    <property type="status" value="NOT_ANNOTATED_CDS"/>
    <property type="molecule type" value="Genomic_DNA"/>
</dbReference>
<dbReference type="EMBL" id="KF570251">
    <property type="status" value="NOT_ANNOTATED_CDS"/>
    <property type="molecule type" value="Genomic_DNA"/>
</dbReference>
<dbReference type="EMBL" id="KF457188">
    <property type="status" value="NOT_ANNOTATED_CDS"/>
    <property type="molecule type" value="Genomic_DNA"/>
</dbReference>
<dbReference type="EMBL" id="KC877845">
    <property type="status" value="NOT_ANNOTATED_CDS"/>
    <property type="molecule type" value="Genomic_DNA"/>
</dbReference>
<dbReference type="EMBL" id="CH471079">
    <property type="protein sequence ID" value="EAX09939.1"/>
    <property type="molecule type" value="Genomic_DNA"/>
</dbReference>
<dbReference type="EMBL" id="CH471079">
    <property type="protein sequence ID" value="EAX09940.1"/>
    <property type="molecule type" value="Genomic_DNA"/>
</dbReference>
<dbReference type="EMBL" id="CH471079">
    <property type="protein sequence ID" value="EAX09941.1"/>
    <property type="molecule type" value="Genomic_DNA"/>
</dbReference>
<dbReference type="EMBL" id="BC011554">
    <property type="protein sequence ID" value="AAH11554.1"/>
    <property type="molecule type" value="mRNA"/>
</dbReference>
<dbReference type="CCDS" id="CCDS33525.1">
    <molecule id="Q9Y5N5-2"/>
</dbReference>
<dbReference type="CCDS" id="CCDS33526.1">
    <molecule id="Q9Y5N5-1"/>
</dbReference>
<dbReference type="RefSeq" id="NP_037372.4">
    <molecule id="Q9Y5N5-1"/>
    <property type="nucleotide sequence ID" value="NM_013240.6"/>
</dbReference>
<dbReference type="RefSeq" id="NP_877426.4">
    <molecule id="Q9Y5N5-2"/>
    <property type="nucleotide sequence ID" value="NM_182749.5"/>
</dbReference>
<dbReference type="PDB" id="6H1D">
    <property type="method" value="X-ray"/>
    <property type="resolution" value="1.94 A"/>
    <property type="chains" value="A=8-214"/>
</dbReference>
<dbReference type="PDB" id="6H1E">
    <property type="method" value="X-ray"/>
    <property type="resolution" value="1.90 A"/>
    <property type="chains" value="A=8-214"/>
</dbReference>
<dbReference type="PDB" id="6K0X">
    <property type="method" value="X-ray"/>
    <property type="resolution" value="2.20 A"/>
    <property type="chains" value="A=2-214"/>
</dbReference>
<dbReference type="PDB" id="6KHS">
    <property type="method" value="X-ray"/>
    <property type="resolution" value="1.90 A"/>
    <property type="chains" value="A=1-214"/>
</dbReference>
<dbReference type="PDB" id="6KMR">
    <property type="method" value="X-ray"/>
    <property type="resolution" value="2.00 A"/>
    <property type="chains" value="B=1-214"/>
</dbReference>
<dbReference type="PDB" id="6KMS">
    <property type="method" value="X-ray"/>
    <property type="resolution" value="3.20 A"/>
    <property type="chains" value="C/D=1-214"/>
</dbReference>
<dbReference type="PDB" id="6PED">
    <property type="method" value="X-ray"/>
    <property type="resolution" value="2.30 A"/>
    <property type="chains" value="A=1-214"/>
</dbReference>
<dbReference type="PDB" id="8CNC">
    <property type="method" value="X-ray"/>
    <property type="resolution" value="1.46 A"/>
    <property type="chains" value="A=13-214"/>
</dbReference>
<dbReference type="PDB" id="8QDG">
    <property type="method" value="X-ray"/>
    <property type="resolution" value="1.39 A"/>
    <property type="chains" value="A=13-214"/>
</dbReference>
<dbReference type="PDB" id="8QDI">
    <property type="method" value="X-ray"/>
    <property type="resolution" value="1.47 A"/>
    <property type="chains" value="A=13-214"/>
</dbReference>
<dbReference type="PDBsum" id="6H1D"/>
<dbReference type="PDBsum" id="6H1E"/>
<dbReference type="PDBsum" id="6K0X"/>
<dbReference type="PDBsum" id="6KHS"/>
<dbReference type="PDBsum" id="6KMR"/>
<dbReference type="PDBsum" id="6KMS"/>
<dbReference type="PDBsum" id="6PED"/>
<dbReference type="PDBsum" id="8CNC"/>
<dbReference type="PDBsum" id="8QDG"/>
<dbReference type="PDBsum" id="8QDI"/>
<dbReference type="SMR" id="Q9Y5N5"/>
<dbReference type="BioGRID" id="118872">
    <property type="interactions" value="11"/>
</dbReference>
<dbReference type="ComplexPortal" id="CPX-2866">
    <property type="entry name" value="N6AMT1-TRM112 methyltransferase complex"/>
</dbReference>
<dbReference type="FunCoup" id="Q9Y5N5">
    <property type="interactions" value="1218"/>
</dbReference>
<dbReference type="IntAct" id="Q9Y5N5">
    <property type="interactions" value="5"/>
</dbReference>
<dbReference type="MINT" id="Q9Y5N5"/>
<dbReference type="STRING" id="9606.ENSP00000303584"/>
<dbReference type="GlyGen" id="Q9Y5N5">
    <property type="glycosylation" value="1 site"/>
</dbReference>
<dbReference type="BioMuta" id="N6AMT1"/>
<dbReference type="DMDM" id="313104228"/>
<dbReference type="jPOST" id="Q9Y5N5"/>
<dbReference type="MassIVE" id="Q9Y5N5"/>
<dbReference type="PaxDb" id="9606-ENSP00000303584"/>
<dbReference type="PeptideAtlas" id="Q9Y5N5"/>
<dbReference type="ProteomicsDB" id="86454">
    <molecule id="Q9Y5N5-1"/>
</dbReference>
<dbReference type="ProteomicsDB" id="86455">
    <molecule id="Q9Y5N5-2"/>
</dbReference>
<dbReference type="Pumba" id="Q9Y5N5"/>
<dbReference type="Antibodypedia" id="22362">
    <property type="antibodies" value="191 antibodies from 25 providers"/>
</dbReference>
<dbReference type="DNASU" id="29104"/>
<dbReference type="Ensembl" id="ENST00000303775.10">
    <molecule id="Q9Y5N5-1"/>
    <property type="protein sequence ID" value="ENSP00000303584.5"/>
    <property type="gene ID" value="ENSG00000156239.12"/>
</dbReference>
<dbReference type="Ensembl" id="ENST00000351429.7">
    <molecule id="Q9Y5N5-2"/>
    <property type="protein sequence ID" value="ENSP00000286764.4"/>
    <property type="gene ID" value="ENSG00000156239.12"/>
</dbReference>
<dbReference type="Ensembl" id="ENST00000460212.1">
    <molecule id="Q9Y5N5-1"/>
    <property type="protein sequence ID" value="ENSP00000436490.1"/>
    <property type="gene ID" value="ENSG00000156239.12"/>
</dbReference>
<dbReference type="GeneID" id="29104"/>
<dbReference type="KEGG" id="hsa:29104"/>
<dbReference type="MANE-Select" id="ENST00000303775.10">
    <property type="protein sequence ID" value="ENSP00000303584.5"/>
    <property type="RefSeq nucleotide sequence ID" value="NM_013240.6"/>
    <property type="RefSeq protein sequence ID" value="NP_037372.4"/>
</dbReference>
<dbReference type="UCSC" id="uc002ymo.3">
    <property type="organism name" value="human"/>
</dbReference>
<dbReference type="UCSC" id="uc002ymp.3">
    <molecule id="Q9Y5N5-1"/>
    <property type="organism name" value="human"/>
</dbReference>
<dbReference type="AGR" id="HGNC:16021"/>
<dbReference type="CTD" id="29104"/>
<dbReference type="DisGeNET" id="29104"/>
<dbReference type="GeneCards" id="N6AMT1"/>
<dbReference type="HGNC" id="HGNC:16021">
    <property type="gene designation" value="HEMK2"/>
</dbReference>
<dbReference type="HPA" id="ENSG00000156239">
    <property type="expression patterns" value="Low tissue specificity"/>
</dbReference>
<dbReference type="MIM" id="614553">
    <property type="type" value="gene"/>
</dbReference>
<dbReference type="neXtProt" id="NX_Q9Y5N5"/>
<dbReference type="OpenTargets" id="ENSG00000156239"/>
<dbReference type="PharmGKB" id="PA162396656"/>
<dbReference type="VEuPathDB" id="HostDB:ENSG00000156239"/>
<dbReference type="eggNOG" id="KOG3191">
    <property type="taxonomic scope" value="Eukaryota"/>
</dbReference>
<dbReference type="GeneTree" id="ENSGT00390000013073"/>
<dbReference type="InParanoid" id="Q9Y5N5"/>
<dbReference type="OMA" id="EWDDWME"/>
<dbReference type="OrthoDB" id="406152at2759"/>
<dbReference type="PAN-GO" id="Q9Y5N5">
    <property type="GO annotations" value="3 GO annotations based on evolutionary models"/>
</dbReference>
<dbReference type="PhylomeDB" id="Q9Y5N5"/>
<dbReference type="TreeFam" id="TF314919"/>
<dbReference type="BioCyc" id="MetaCyc:ENSG00000156239-MONOMER"/>
<dbReference type="BRENDA" id="2.1.1.137">
    <property type="organism ID" value="2681"/>
</dbReference>
<dbReference type="BRENDA" id="2.1.1.72">
    <property type="organism ID" value="2681"/>
</dbReference>
<dbReference type="PathwayCommons" id="Q9Y5N5"/>
<dbReference type="Reactome" id="R-HSA-156581">
    <property type="pathway name" value="Methylation"/>
</dbReference>
<dbReference type="Reactome" id="R-HSA-72764">
    <property type="pathway name" value="Eukaryotic Translation Termination"/>
</dbReference>
<dbReference type="SignaLink" id="Q9Y5N5"/>
<dbReference type="BioGRID-ORCS" id="29104">
    <property type="hits" value="380 hits in 1179 CRISPR screens"/>
</dbReference>
<dbReference type="ChiTaRS" id="N6AMT1">
    <property type="organism name" value="human"/>
</dbReference>
<dbReference type="GenomeRNAi" id="29104"/>
<dbReference type="Pharos" id="Q9Y5N5">
    <property type="development level" value="Tbio"/>
</dbReference>
<dbReference type="PRO" id="PR:Q9Y5N5"/>
<dbReference type="Proteomes" id="UP000005640">
    <property type="component" value="Chromosome 21"/>
</dbReference>
<dbReference type="RNAct" id="Q9Y5N5">
    <property type="molecule type" value="protein"/>
</dbReference>
<dbReference type="Bgee" id="ENSG00000156239">
    <property type="expression patterns" value="Expressed in male germ line stem cell (sensu Vertebrata) in testis and 124 other cell types or tissues"/>
</dbReference>
<dbReference type="GO" id="GO:0005829">
    <property type="term" value="C:cytosol"/>
    <property type="evidence" value="ECO:0000304"/>
    <property type="project" value="Reactome"/>
</dbReference>
<dbReference type="GO" id="GO:0035657">
    <property type="term" value="C:eRF1 methyltransferase complex"/>
    <property type="evidence" value="ECO:0000318"/>
    <property type="project" value="GO_Central"/>
</dbReference>
<dbReference type="GO" id="GO:0005634">
    <property type="term" value="C:nucleus"/>
    <property type="evidence" value="ECO:0000250"/>
    <property type="project" value="UniProtKB"/>
</dbReference>
<dbReference type="GO" id="GO:0032991">
    <property type="term" value="C:protein-containing complex"/>
    <property type="evidence" value="ECO:0000314"/>
    <property type="project" value="MGI"/>
</dbReference>
<dbReference type="GO" id="GO:0030791">
    <property type="term" value="F:arsenite methyltransferase activity"/>
    <property type="evidence" value="ECO:0000314"/>
    <property type="project" value="UniProtKB"/>
</dbReference>
<dbReference type="GO" id="GO:0140984">
    <property type="term" value="F:histone H4K12 methyltransferase activity"/>
    <property type="evidence" value="ECO:0000314"/>
    <property type="project" value="UniProtKB"/>
</dbReference>
<dbReference type="GO" id="GO:0003676">
    <property type="term" value="F:nucleic acid binding"/>
    <property type="evidence" value="ECO:0007669"/>
    <property type="project" value="InterPro"/>
</dbReference>
<dbReference type="GO" id="GO:0008276">
    <property type="term" value="F:protein methyltransferase activity"/>
    <property type="evidence" value="ECO:0000314"/>
    <property type="project" value="UniProtKB"/>
</dbReference>
<dbReference type="GO" id="GO:0036009">
    <property type="term" value="F:protein-glutamine N-methyltransferase activity"/>
    <property type="evidence" value="ECO:0000314"/>
    <property type="project" value="UniProtKB"/>
</dbReference>
<dbReference type="GO" id="GO:1904047">
    <property type="term" value="F:S-adenosyl-L-methionine binding"/>
    <property type="evidence" value="ECO:0000314"/>
    <property type="project" value="UniProtKB"/>
</dbReference>
<dbReference type="GO" id="GO:0008757">
    <property type="term" value="F:S-adenosylmethionine-dependent methyltransferase activity"/>
    <property type="evidence" value="ECO:0000318"/>
    <property type="project" value="GO_Central"/>
</dbReference>
<dbReference type="GO" id="GO:0009007">
    <property type="term" value="F:site-specific DNA-methyltransferase (adenine-specific) activity"/>
    <property type="evidence" value="ECO:0000314"/>
    <property type="project" value="UniProtKB"/>
</dbReference>
<dbReference type="GO" id="GO:0018872">
    <property type="term" value="P:arsonoacetate metabolic process"/>
    <property type="evidence" value="ECO:0000314"/>
    <property type="project" value="UniProtKB"/>
</dbReference>
<dbReference type="GO" id="GO:0032259">
    <property type="term" value="P:methylation"/>
    <property type="evidence" value="ECO:0000314"/>
    <property type="project" value="UniProtKB"/>
</dbReference>
<dbReference type="GO" id="GO:0045814">
    <property type="term" value="P:negative regulation of gene expression, epigenetic"/>
    <property type="evidence" value="ECO:0000314"/>
    <property type="project" value="UniProtKB"/>
</dbReference>
<dbReference type="GO" id="GO:0018364">
    <property type="term" value="P:peptidyl-glutamine methylation"/>
    <property type="evidence" value="ECO:0000314"/>
    <property type="project" value="UniProtKB"/>
</dbReference>
<dbReference type="GO" id="GO:0030307">
    <property type="term" value="P:positive regulation of cell growth"/>
    <property type="evidence" value="ECO:0000314"/>
    <property type="project" value="MGI"/>
</dbReference>
<dbReference type="GO" id="GO:0009404">
    <property type="term" value="P:toxin metabolic process"/>
    <property type="evidence" value="ECO:0000314"/>
    <property type="project" value="UniProtKB"/>
</dbReference>
<dbReference type="GO" id="GO:0045815">
    <property type="term" value="P:transcription initiation-coupled chromatin remodeling"/>
    <property type="evidence" value="ECO:0000314"/>
    <property type="project" value="UniProtKB"/>
</dbReference>
<dbReference type="CDD" id="cd02440">
    <property type="entry name" value="AdoMet_MTases"/>
    <property type="match status" value="1"/>
</dbReference>
<dbReference type="FunFam" id="3.40.50.150:FF:000077">
    <property type="entry name" value="HemK methyltransferase family member 2"/>
    <property type="match status" value="1"/>
</dbReference>
<dbReference type="Gene3D" id="3.40.50.150">
    <property type="entry name" value="Vaccinia Virus protein VP39"/>
    <property type="match status" value="1"/>
</dbReference>
<dbReference type="InterPro" id="IPR002052">
    <property type="entry name" value="DNA_methylase_N6_adenine_CS"/>
</dbReference>
<dbReference type="InterPro" id="IPR052190">
    <property type="entry name" value="Euk-Arch_PrmC-MTase"/>
</dbReference>
<dbReference type="InterPro" id="IPR004557">
    <property type="entry name" value="PrmC-related"/>
</dbReference>
<dbReference type="InterPro" id="IPR029063">
    <property type="entry name" value="SAM-dependent_MTases_sf"/>
</dbReference>
<dbReference type="InterPro" id="IPR007848">
    <property type="entry name" value="Small_mtfrase_dom"/>
</dbReference>
<dbReference type="NCBIfam" id="TIGR00537">
    <property type="entry name" value="hemK_rel_arch"/>
    <property type="match status" value="1"/>
</dbReference>
<dbReference type="PANTHER" id="PTHR45875">
    <property type="entry name" value="METHYLTRANSFERASE N6AMT1"/>
    <property type="match status" value="1"/>
</dbReference>
<dbReference type="PANTHER" id="PTHR45875:SF3">
    <property type="entry name" value="METHYLTRANSFERASE N6AMT1"/>
    <property type="match status" value="1"/>
</dbReference>
<dbReference type="Pfam" id="PF05175">
    <property type="entry name" value="MTS"/>
    <property type="match status" value="1"/>
</dbReference>
<dbReference type="SUPFAM" id="SSF53335">
    <property type="entry name" value="S-adenosyl-L-methionine-dependent methyltransferases"/>
    <property type="match status" value="1"/>
</dbReference>
<dbReference type="PROSITE" id="PS00092">
    <property type="entry name" value="N6_MTASE"/>
    <property type="match status" value="1"/>
</dbReference>
<evidence type="ECO:0000250" key="1">
    <source>
        <dbReference type="UniProtKB" id="Q6SKR2"/>
    </source>
</evidence>
<evidence type="ECO:0000269" key="2">
    <source>
    </source>
</evidence>
<evidence type="ECO:0000269" key="3">
    <source>
    </source>
</evidence>
<evidence type="ECO:0000269" key="4">
    <source>
    </source>
</evidence>
<evidence type="ECO:0000269" key="5">
    <source>
    </source>
</evidence>
<evidence type="ECO:0000269" key="6">
    <source>
    </source>
</evidence>
<evidence type="ECO:0000269" key="7">
    <source>
    </source>
</evidence>
<evidence type="ECO:0000269" key="8">
    <source>
    </source>
</evidence>
<evidence type="ECO:0000269" key="9">
    <source>
    </source>
</evidence>
<evidence type="ECO:0000269" key="10">
    <source>
    </source>
</evidence>
<evidence type="ECO:0000269" key="11">
    <source>
    </source>
</evidence>
<evidence type="ECO:0000269" key="12">
    <source>
    </source>
</evidence>
<evidence type="ECO:0000269" key="13">
    <source>
    </source>
</evidence>
<evidence type="ECO:0000269" key="14">
    <source>
    </source>
</evidence>
<evidence type="ECO:0000269" key="15">
    <source>
    </source>
</evidence>
<evidence type="ECO:0000269" key="16">
    <source>
    </source>
</evidence>
<evidence type="ECO:0000303" key="17">
    <source>
    </source>
</evidence>
<evidence type="ECO:0000303" key="18">
    <source>
    </source>
</evidence>
<evidence type="ECO:0000303" key="19">
    <source>
    </source>
</evidence>
<evidence type="ECO:0000303" key="20">
    <source>
    </source>
</evidence>
<evidence type="ECO:0000303" key="21">
    <source>
    </source>
</evidence>
<evidence type="ECO:0000305" key="22"/>
<evidence type="ECO:0000305" key="23">
    <source>
    </source>
</evidence>
<evidence type="ECO:0000305" key="24">
    <source>
    </source>
</evidence>
<evidence type="ECO:0000312" key="25">
    <source>
        <dbReference type="HGNC" id="HGNC:16021"/>
    </source>
</evidence>
<evidence type="ECO:0007744" key="26">
    <source>
        <dbReference type="PDB" id="6H1D"/>
    </source>
</evidence>
<evidence type="ECO:0007744" key="27">
    <source>
        <dbReference type="PDB" id="6H1E"/>
    </source>
</evidence>
<evidence type="ECO:0007744" key="28">
    <source>
        <dbReference type="PDB" id="6K0X"/>
    </source>
</evidence>
<evidence type="ECO:0007744" key="29">
    <source>
        <dbReference type="PDB" id="6KHS"/>
    </source>
</evidence>
<evidence type="ECO:0007744" key="30">
    <source>
        <dbReference type="PDB" id="6KMR"/>
    </source>
</evidence>
<evidence type="ECO:0007744" key="31">
    <source>
        <dbReference type="PDB" id="6KMS"/>
    </source>
</evidence>
<evidence type="ECO:0007829" key="32">
    <source>
        <dbReference type="PDB" id="6H1E"/>
    </source>
</evidence>
<evidence type="ECO:0007829" key="33">
    <source>
        <dbReference type="PDB" id="8CNC"/>
    </source>
</evidence>
<name>HEMK2_HUMAN</name>
<organism>
    <name type="scientific">Homo sapiens</name>
    <name type="common">Human</name>
    <dbReference type="NCBI Taxonomy" id="9606"/>
    <lineage>
        <taxon>Eukaryota</taxon>
        <taxon>Metazoa</taxon>
        <taxon>Chordata</taxon>
        <taxon>Craniata</taxon>
        <taxon>Vertebrata</taxon>
        <taxon>Euteleostomi</taxon>
        <taxon>Mammalia</taxon>
        <taxon>Eutheria</taxon>
        <taxon>Euarchontoglires</taxon>
        <taxon>Primates</taxon>
        <taxon>Haplorrhini</taxon>
        <taxon>Catarrhini</taxon>
        <taxon>Hominidae</taxon>
        <taxon>Homo</taxon>
    </lineage>
</organism>